<feature type="chain" id="PRO_1000185194" description="Pyrimidine/purine nucleoside phosphorylase">
    <location>
        <begin position="1"/>
        <end position="94"/>
    </location>
</feature>
<dbReference type="EC" id="2.4.2.1" evidence="1"/>
<dbReference type="EC" id="2.4.2.2" evidence="1"/>
<dbReference type="EMBL" id="CU928145">
    <property type="protein sequence ID" value="CAU96274.1"/>
    <property type="molecule type" value="Genomic_DNA"/>
</dbReference>
<dbReference type="RefSeq" id="WP_000941942.1">
    <property type="nucleotide sequence ID" value="NZ_CP028304.1"/>
</dbReference>
<dbReference type="SMR" id="B7L546"/>
<dbReference type="GeneID" id="93777070"/>
<dbReference type="KEGG" id="eck:EC55989_0400"/>
<dbReference type="HOGENOM" id="CLU_157874_0_0_6"/>
<dbReference type="Proteomes" id="UP000000746">
    <property type="component" value="Chromosome"/>
</dbReference>
<dbReference type="GO" id="GO:0005829">
    <property type="term" value="C:cytosol"/>
    <property type="evidence" value="ECO:0007669"/>
    <property type="project" value="TreeGrafter"/>
</dbReference>
<dbReference type="GO" id="GO:0047975">
    <property type="term" value="F:guanosine phosphorylase activity"/>
    <property type="evidence" value="ECO:0007669"/>
    <property type="project" value="UniProtKB-EC"/>
</dbReference>
<dbReference type="GO" id="GO:0004731">
    <property type="term" value="F:purine-nucleoside phosphorylase activity"/>
    <property type="evidence" value="ECO:0007669"/>
    <property type="project" value="UniProtKB-UniRule"/>
</dbReference>
<dbReference type="GO" id="GO:0009032">
    <property type="term" value="F:thymidine phosphorylase activity"/>
    <property type="evidence" value="ECO:0007669"/>
    <property type="project" value="UniProtKB-EC"/>
</dbReference>
<dbReference type="GO" id="GO:0004850">
    <property type="term" value="F:uridine phosphorylase activity"/>
    <property type="evidence" value="ECO:0007669"/>
    <property type="project" value="UniProtKB-EC"/>
</dbReference>
<dbReference type="CDD" id="cd20296">
    <property type="entry name" value="cupin_PpnP-like"/>
    <property type="match status" value="1"/>
</dbReference>
<dbReference type="FunFam" id="2.60.120.10:FF:000016">
    <property type="entry name" value="Pyrimidine/purine nucleoside phosphorylase"/>
    <property type="match status" value="1"/>
</dbReference>
<dbReference type="Gene3D" id="2.60.120.10">
    <property type="entry name" value="Jelly Rolls"/>
    <property type="match status" value="1"/>
</dbReference>
<dbReference type="HAMAP" id="MF_01537">
    <property type="entry name" value="Nucleos_phosphorylase_PpnP"/>
    <property type="match status" value="1"/>
</dbReference>
<dbReference type="InterPro" id="IPR009664">
    <property type="entry name" value="Ppnp"/>
</dbReference>
<dbReference type="InterPro" id="IPR014710">
    <property type="entry name" value="RmlC-like_jellyroll"/>
</dbReference>
<dbReference type="InterPro" id="IPR011051">
    <property type="entry name" value="RmlC_Cupin_sf"/>
</dbReference>
<dbReference type="NCBIfam" id="NF007875">
    <property type="entry name" value="PRK10579.1"/>
    <property type="match status" value="1"/>
</dbReference>
<dbReference type="PANTHER" id="PTHR36540">
    <property type="entry name" value="PYRIMIDINE/PURINE NUCLEOSIDE PHOSPHORYLASE"/>
    <property type="match status" value="1"/>
</dbReference>
<dbReference type="PANTHER" id="PTHR36540:SF1">
    <property type="entry name" value="PYRIMIDINE_PURINE NUCLEOSIDE PHOSPHORYLASE"/>
    <property type="match status" value="1"/>
</dbReference>
<dbReference type="Pfam" id="PF06865">
    <property type="entry name" value="Ppnp"/>
    <property type="match status" value="1"/>
</dbReference>
<dbReference type="SUPFAM" id="SSF51182">
    <property type="entry name" value="RmlC-like cupins"/>
    <property type="match status" value="1"/>
</dbReference>
<gene>
    <name evidence="1" type="primary">ppnP</name>
    <name type="ordered locus">EC55989_0400</name>
</gene>
<protein>
    <recommendedName>
        <fullName evidence="1">Pyrimidine/purine nucleoside phosphorylase</fullName>
        <ecNumber evidence="1">2.4.2.1</ecNumber>
        <ecNumber evidence="1">2.4.2.2</ecNumber>
    </recommendedName>
    <alternativeName>
        <fullName evidence="1">Adenosine phosphorylase</fullName>
    </alternativeName>
    <alternativeName>
        <fullName evidence="1">Cytidine phosphorylase</fullName>
    </alternativeName>
    <alternativeName>
        <fullName evidence="1">Guanosine phosphorylase</fullName>
    </alternativeName>
    <alternativeName>
        <fullName evidence="1">Inosine phosphorylase</fullName>
    </alternativeName>
    <alternativeName>
        <fullName evidence="1">Thymidine phosphorylase</fullName>
    </alternativeName>
    <alternativeName>
        <fullName evidence="1">Uridine phosphorylase</fullName>
    </alternativeName>
    <alternativeName>
        <fullName evidence="1">Xanthosine phosphorylase</fullName>
    </alternativeName>
</protein>
<sequence length="94" mass="10234">MLQSNEYFSGKVKSIGFSSSSTGRASVGVMVEGEYTFSTAEPEEMTVISGALNVLLPDATDWQVYEAGSVFNVPGHSEFHLQVAEPTSYLCRYL</sequence>
<keyword id="KW-0328">Glycosyltransferase</keyword>
<keyword id="KW-1185">Reference proteome</keyword>
<keyword id="KW-0808">Transferase</keyword>
<organism>
    <name type="scientific">Escherichia coli (strain 55989 / EAEC)</name>
    <dbReference type="NCBI Taxonomy" id="585055"/>
    <lineage>
        <taxon>Bacteria</taxon>
        <taxon>Pseudomonadati</taxon>
        <taxon>Pseudomonadota</taxon>
        <taxon>Gammaproteobacteria</taxon>
        <taxon>Enterobacterales</taxon>
        <taxon>Enterobacteriaceae</taxon>
        <taxon>Escherichia</taxon>
    </lineage>
</organism>
<name>PPNP_ECO55</name>
<evidence type="ECO:0000255" key="1">
    <source>
        <dbReference type="HAMAP-Rule" id="MF_01537"/>
    </source>
</evidence>
<proteinExistence type="inferred from homology"/>
<comment type="function">
    <text evidence="1">Catalyzes the phosphorolysis of diverse nucleosides, yielding D-ribose 1-phosphate and the respective free bases. Can use uridine, adenosine, guanosine, cytidine, thymidine, inosine and xanthosine as substrates. Also catalyzes the reverse reactions.</text>
</comment>
<comment type="catalytic activity">
    <reaction evidence="1">
        <text>a purine D-ribonucleoside + phosphate = a purine nucleobase + alpha-D-ribose 1-phosphate</text>
        <dbReference type="Rhea" id="RHEA:19805"/>
        <dbReference type="ChEBI" id="CHEBI:26386"/>
        <dbReference type="ChEBI" id="CHEBI:43474"/>
        <dbReference type="ChEBI" id="CHEBI:57720"/>
        <dbReference type="ChEBI" id="CHEBI:142355"/>
        <dbReference type="EC" id="2.4.2.1"/>
    </reaction>
</comment>
<comment type="catalytic activity">
    <reaction evidence="1">
        <text>adenosine + phosphate = alpha-D-ribose 1-phosphate + adenine</text>
        <dbReference type="Rhea" id="RHEA:27642"/>
        <dbReference type="ChEBI" id="CHEBI:16335"/>
        <dbReference type="ChEBI" id="CHEBI:16708"/>
        <dbReference type="ChEBI" id="CHEBI:43474"/>
        <dbReference type="ChEBI" id="CHEBI:57720"/>
        <dbReference type="EC" id="2.4.2.1"/>
    </reaction>
</comment>
<comment type="catalytic activity">
    <reaction evidence="1">
        <text>cytidine + phosphate = cytosine + alpha-D-ribose 1-phosphate</text>
        <dbReference type="Rhea" id="RHEA:52540"/>
        <dbReference type="ChEBI" id="CHEBI:16040"/>
        <dbReference type="ChEBI" id="CHEBI:17562"/>
        <dbReference type="ChEBI" id="CHEBI:43474"/>
        <dbReference type="ChEBI" id="CHEBI:57720"/>
        <dbReference type="EC" id="2.4.2.2"/>
    </reaction>
</comment>
<comment type="catalytic activity">
    <reaction evidence="1">
        <text>guanosine + phosphate = alpha-D-ribose 1-phosphate + guanine</text>
        <dbReference type="Rhea" id="RHEA:13233"/>
        <dbReference type="ChEBI" id="CHEBI:16235"/>
        <dbReference type="ChEBI" id="CHEBI:16750"/>
        <dbReference type="ChEBI" id="CHEBI:43474"/>
        <dbReference type="ChEBI" id="CHEBI:57720"/>
        <dbReference type="EC" id="2.4.2.1"/>
    </reaction>
</comment>
<comment type="catalytic activity">
    <reaction evidence="1">
        <text>inosine + phosphate = alpha-D-ribose 1-phosphate + hypoxanthine</text>
        <dbReference type="Rhea" id="RHEA:27646"/>
        <dbReference type="ChEBI" id="CHEBI:17368"/>
        <dbReference type="ChEBI" id="CHEBI:17596"/>
        <dbReference type="ChEBI" id="CHEBI:43474"/>
        <dbReference type="ChEBI" id="CHEBI:57720"/>
        <dbReference type="EC" id="2.4.2.1"/>
    </reaction>
</comment>
<comment type="catalytic activity">
    <reaction evidence="1">
        <text>thymidine + phosphate = 2-deoxy-alpha-D-ribose 1-phosphate + thymine</text>
        <dbReference type="Rhea" id="RHEA:16037"/>
        <dbReference type="ChEBI" id="CHEBI:17748"/>
        <dbReference type="ChEBI" id="CHEBI:17821"/>
        <dbReference type="ChEBI" id="CHEBI:43474"/>
        <dbReference type="ChEBI" id="CHEBI:57259"/>
        <dbReference type="EC" id="2.4.2.2"/>
    </reaction>
</comment>
<comment type="catalytic activity">
    <reaction evidence="1">
        <text>uridine + phosphate = alpha-D-ribose 1-phosphate + uracil</text>
        <dbReference type="Rhea" id="RHEA:24388"/>
        <dbReference type="ChEBI" id="CHEBI:16704"/>
        <dbReference type="ChEBI" id="CHEBI:17568"/>
        <dbReference type="ChEBI" id="CHEBI:43474"/>
        <dbReference type="ChEBI" id="CHEBI:57720"/>
        <dbReference type="EC" id="2.4.2.2"/>
    </reaction>
</comment>
<comment type="catalytic activity">
    <reaction evidence="1">
        <text>xanthosine + phosphate = alpha-D-ribose 1-phosphate + xanthine</text>
        <dbReference type="Rhea" id="RHEA:27638"/>
        <dbReference type="ChEBI" id="CHEBI:17712"/>
        <dbReference type="ChEBI" id="CHEBI:18107"/>
        <dbReference type="ChEBI" id="CHEBI:43474"/>
        <dbReference type="ChEBI" id="CHEBI:57720"/>
        <dbReference type="EC" id="2.4.2.1"/>
    </reaction>
</comment>
<comment type="similarity">
    <text evidence="1">Belongs to the nucleoside phosphorylase PpnP family.</text>
</comment>
<reference key="1">
    <citation type="journal article" date="2009" name="PLoS Genet.">
        <title>Organised genome dynamics in the Escherichia coli species results in highly diverse adaptive paths.</title>
        <authorList>
            <person name="Touchon M."/>
            <person name="Hoede C."/>
            <person name="Tenaillon O."/>
            <person name="Barbe V."/>
            <person name="Baeriswyl S."/>
            <person name="Bidet P."/>
            <person name="Bingen E."/>
            <person name="Bonacorsi S."/>
            <person name="Bouchier C."/>
            <person name="Bouvet O."/>
            <person name="Calteau A."/>
            <person name="Chiapello H."/>
            <person name="Clermont O."/>
            <person name="Cruveiller S."/>
            <person name="Danchin A."/>
            <person name="Diard M."/>
            <person name="Dossat C."/>
            <person name="Karoui M.E."/>
            <person name="Frapy E."/>
            <person name="Garry L."/>
            <person name="Ghigo J.M."/>
            <person name="Gilles A.M."/>
            <person name="Johnson J."/>
            <person name="Le Bouguenec C."/>
            <person name="Lescat M."/>
            <person name="Mangenot S."/>
            <person name="Martinez-Jehanne V."/>
            <person name="Matic I."/>
            <person name="Nassif X."/>
            <person name="Oztas S."/>
            <person name="Petit M.A."/>
            <person name="Pichon C."/>
            <person name="Rouy Z."/>
            <person name="Ruf C.S."/>
            <person name="Schneider D."/>
            <person name="Tourret J."/>
            <person name="Vacherie B."/>
            <person name="Vallenet D."/>
            <person name="Medigue C."/>
            <person name="Rocha E.P.C."/>
            <person name="Denamur E."/>
        </authorList>
    </citation>
    <scope>NUCLEOTIDE SEQUENCE [LARGE SCALE GENOMIC DNA]</scope>
    <source>
        <strain>55989 / EAEC</strain>
    </source>
</reference>
<accession>B7L546</accession>